<accession>Q9LZK5</accession>
<comment type="function">
    <text evidence="4">Regulates protein folding in the endoplasmic reticulum (ER) lumen. Forms a complex in the ER with SDF2 and MED37A/BIP1 which is required for the proper accumulation and function of the surface-exposed leucine-rich repeat receptor kinases EFR involved in pathogen-associated molecular pattern (PAMP) triggered immunity.</text>
</comment>
<comment type="subunit">
    <text evidence="4">Interacts with SDF2 and MED37A/BIP1.</text>
</comment>
<comment type="subcellular location">
    <subcellularLocation>
        <location evidence="5">Endoplasmic reticulum lumen</location>
    </subcellularLocation>
</comment>
<comment type="tissue specificity">
    <text evidence="3">Expressed in leaves, flower buds and flowers.</text>
</comment>
<comment type="induction">
    <text evidence="3">By tunicamycin.</text>
</comment>
<comment type="PTM">
    <text evidence="3">N-glycosylated.</text>
</comment>
<comment type="disruption phenotype">
    <text evidence="3 4">No visible phenotype under normal growth conditions, but mutant plants are insensitive to seedling growth inhibition in response to the pathogen-associated molecular pattern (PAMP) elf18. The double mutant erdj3b and p58ipk is male gametophytic lethal.</text>
</comment>
<gene>
    <name type="primary">ERDJ3B</name>
    <name type="synonym">B19</name>
    <name type="ordered locus">At3g62600</name>
    <name type="ORF">F26K9.30</name>
</gene>
<sequence length="346" mass="39200">MAIRWSELCIVLFALSYAICVLAGKSYYDVLQVPKGASDEQIKRAYRKLALKYHPDKNQGNEEATRKFAEINNAYEVLSDEEKREIYNKYGEEGLKQFSANGGRGGGGGGMNMQDIFSSFFGGGSMEEEEKVVKGDDVIVELEATLEDLYMGGSMKVWREKNVIKPAPGKRKCNCRNEVYHRQIGPGMFQQMTEQVCDKCPNVKYEREGYFVTVDIEKGMKDGEEVSFYEDGEPILDGDPGDLKFRIRTAPHARFRRDGNDLHMNVNITLVEALVGFEKSFKHLDDHEVDISSKGITKPKEVKKFKGEGMPLHYSTKKGNLFVTFEVLFPSSLTDDQKKKIKEVFA</sequence>
<evidence type="ECO:0000255" key="1"/>
<evidence type="ECO:0000255" key="2">
    <source>
        <dbReference type="PROSITE-ProRule" id="PRU00286"/>
    </source>
</evidence>
<evidence type="ECO:0000269" key="3">
    <source>
    </source>
</evidence>
<evidence type="ECO:0000269" key="4">
    <source>
    </source>
</evidence>
<evidence type="ECO:0000305" key="5">
    <source>
    </source>
</evidence>
<dbReference type="EMBL" id="AL162651">
    <property type="protein sequence ID" value="CAB83110.1"/>
    <property type="molecule type" value="Genomic_DNA"/>
</dbReference>
<dbReference type="EMBL" id="CP002686">
    <property type="protein sequence ID" value="AEE80368.1"/>
    <property type="molecule type" value="Genomic_DNA"/>
</dbReference>
<dbReference type="EMBL" id="AY125534">
    <property type="protein sequence ID" value="AAM78044.1"/>
    <property type="molecule type" value="mRNA"/>
</dbReference>
<dbReference type="EMBL" id="AY094429">
    <property type="protein sequence ID" value="AAM19802.1"/>
    <property type="molecule type" value="mRNA"/>
</dbReference>
<dbReference type="EMBL" id="AY087640">
    <property type="protein sequence ID" value="AAM65179.1"/>
    <property type="molecule type" value="mRNA"/>
</dbReference>
<dbReference type="PIR" id="T48049">
    <property type="entry name" value="T48049"/>
</dbReference>
<dbReference type="RefSeq" id="NP_191819.1">
    <property type="nucleotide sequence ID" value="NM_116125.3"/>
</dbReference>
<dbReference type="SMR" id="Q9LZK5"/>
<dbReference type="BioGRID" id="10748">
    <property type="interactions" value="3"/>
</dbReference>
<dbReference type="FunCoup" id="Q9LZK5">
    <property type="interactions" value="3385"/>
</dbReference>
<dbReference type="IntAct" id="Q9LZK5">
    <property type="interactions" value="4"/>
</dbReference>
<dbReference type="MINT" id="Q9LZK5"/>
<dbReference type="STRING" id="3702.Q9LZK5"/>
<dbReference type="GlyCosmos" id="Q9LZK5">
    <property type="glycosylation" value="1 site, No reported glycans"/>
</dbReference>
<dbReference type="GlyGen" id="Q9LZK5">
    <property type="glycosylation" value="1 site"/>
</dbReference>
<dbReference type="iPTMnet" id="Q9LZK5"/>
<dbReference type="PaxDb" id="3702-AT3G62600.1"/>
<dbReference type="ProteomicsDB" id="222082"/>
<dbReference type="EnsemblPlants" id="AT3G62600.1">
    <property type="protein sequence ID" value="AT3G62600.1"/>
    <property type="gene ID" value="AT3G62600"/>
</dbReference>
<dbReference type="GeneID" id="825434"/>
<dbReference type="Gramene" id="AT3G62600.1">
    <property type="protein sequence ID" value="AT3G62600.1"/>
    <property type="gene ID" value="AT3G62600"/>
</dbReference>
<dbReference type="KEGG" id="ath:AT3G62600"/>
<dbReference type="Araport" id="AT3G62600"/>
<dbReference type="TAIR" id="AT3G62600">
    <property type="gene designation" value="ATERDJ3B"/>
</dbReference>
<dbReference type="eggNOG" id="KOG0713">
    <property type="taxonomic scope" value="Eukaryota"/>
</dbReference>
<dbReference type="HOGENOM" id="CLU_017633_0_0_1"/>
<dbReference type="InParanoid" id="Q9LZK5"/>
<dbReference type="OMA" id="KWHEDGD"/>
<dbReference type="OrthoDB" id="550424at2759"/>
<dbReference type="PhylomeDB" id="Q9LZK5"/>
<dbReference type="CD-CODE" id="4299E36E">
    <property type="entry name" value="Nucleolus"/>
</dbReference>
<dbReference type="PRO" id="PR:Q9LZK5"/>
<dbReference type="Proteomes" id="UP000006548">
    <property type="component" value="Chromosome 3"/>
</dbReference>
<dbReference type="ExpressionAtlas" id="Q9LZK5">
    <property type="expression patterns" value="baseline and differential"/>
</dbReference>
<dbReference type="GO" id="GO:0005829">
    <property type="term" value="C:cytosol"/>
    <property type="evidence" value="ECO:0007005"/>
    <property type="project" value="TAIR"/>
</dbReference>
<dbReference type="GO" id="GO:0005783">
    <property type="term" value="C:endoplasmic reticulum"/>
    <property type="evidence" value="ECO:0007005"/>
    <property type="project" value="TAIR"/>
</dbReference>
<dbReference type="GO" id="GO:0005788">
    <property type="term" value="C:endoplasmic reticulum lumen"/>
    <property type="evidence" value="ECO:0000314"/>
    <property type="project" value="TAIR"/>
</dbReference>
<dbReference type="GO" id="GO:0030544">
    <property type="term" value="F:Hsp70 protein binding"/>
    <property type="evidence" value="ECO:0007669"/>
    <property type="project" value="InterPro"/>
</dbReference>
<dbReference type="GO" id="GO:0051082">
    <property type="term" value="F:unfolded protein binding"/>
    <property type="evidence" value="ECO:0007669"/>
    <property type="project" value="InterPro"/>
</dbReference>
<dbReference type="GO" id="GO:0002221">
    <property type="term" value="P:pattern recognition receptor signaling pathway"/>
    <property type="evidence" value="ECO:0000315"/>
    <property type="project" value="TAIR"/>
</dbReference>
<dbReference type="GO" id="GO:0006457">
    <property type="term" value="P:protein folding"/>
    <property type="evidence" value="ECO:0007669"/>
    <property type="project" value="InterPro"/>
</dbReference>
<dbReference type="CDD" id="cd06257">
    <property type="entry name" value="DnaJ"/>
    <property type="match status" value="1"/>
</dbReference>
<dbReference type="CDD" id="cd10747">
    <property type="entry name" value="DnaJ_C"/>
    <property type="match status" value="1"/>
</dbReference>
<dbReference type="FunFam" id="1.10.287.110:FF:000062">
    <property type="entry name" value="DnaJ protein ERDJ3B"/>
    <property type="match status" value="1"/>
</dbReference>
<dbReference type="FunFam" id="2.60.260.20:FF:000013">
    <property type="entry name" value="DnaJ subfamily B member 11"/>
    <property type="match status" value="1"/>
</dbReference>
<dbReference type="Gene3D" id="1.10.287.110">
    <property type="entry name" value="DnaJ domain"/>
    <property type="match status" value="1"/>
</dbReference>
<dbReference type="Gene3D" id="2.60.260.20">
    <property type="entry name" value="Urease metallochaperone UreE, N-terminal domain"/>
    <property type="match status" value="2"/>
</dbReference>
<dbReference type="InterPro" id="IPR002939">
    <property type="entry name" value="DnaJ_C"/>
</dbReference>
<dbReference type="InterPro" id="IPR001623">
    <property type="entry name" value="DnaJ_domain"/>
</dbReference>
<dbReference type="InterPro" id="IPR018253">
    <property type="entry name" value="DnaJ_domain_CS"/>
</dbReference>
<dbReference type="InterPro" id="IPR044713">
    <property type="entry name" value="DNJA1/2-like"/>
</dbReference>
<dbReference type="InterPro" id="IPR008971">
    <property type="entry name" value="HSP40/DnaJ_pept-bd"/>
</dbReference>
<dbReference type="InterPro" id="IPR036869">
    <property type="entry name" value="J_dom_sf"/>
</dbReference>
<dbReference type="PANTHER" id="PTHR43888">
    <property type="entry name" value="DNAJ-LIKE-2, ISOFORM A-RELATED"/>
    <property type="match status" value="1"/>
</dbReference>
<dbReference type="Pfam" id="PF00226">
    <property type="entry name" value="DnaJ"/>
    <property type="match status" value="1"/>
</dbReference>
<dbReference type="Pfam" id="PF01556">
    <property type="entry name" value="DnaJ_C"/>
    <property type="match status" value="1"/>
</dbReference>
<dbReference type="PRINTS" id="PR00625">
    <property type="entry name" value="JDOMAIN"/>
</dbReference>
<dbReference type="SMART" id="SM00271">
    <property type="entry name" value="DnaJ"/>
    <property type="match status" value="1"/>
</dbReference>
<dbReference type="SUPFAM" id="SSF46565">
    <property type="entry name" value="Chaperone J-domain"/>
    <property type="match status" value="1"/>
</dbReference>
<dbReference type="SUPFAM" id="SSF49493">
    <property type="entry name" value="HSP40/DnaJ peptide-binding domain"/>
    <property type="match status" value="2"/>
</dbReference>
<dbReference type="PROSITE" id="PS00636">
    <property type="entry name" value="DNAJ_1"/>
    <property type="match status" value="1"/>
</dbReference>
<dbReference type="PROSITE" id="PS50076">
    <property type="entry name" value="DNAJ_2"/>
    <property type="match status" value="1"/>
</dbReference>
<feature type="signal peptide" evidence="1">
    <location>
        <begin position="1"/>
        <end position="23"/>
    </location>
</feature>
<feature type="chain" id="PRO_0000430363" description="DnaJ protein ERDJ3B">
    <location>
        <begin position="24"/>
        <end position="346"/>
    </location>
</feature>
<feature type="domain" description="J" evidence="2">
    <location>
        <begin position="26"/>
        <end position="91"/>
    </location>
</feature>
<feature type="glycosylation site" description="N-linked (GlcNAc...) asparagine" evidence="1">
    <location>
        <position position="267"/>
    </location>
</feature>
<name>DNJ19_ARATH</name>
<organism>
    <name type="scientific">Arabidopsis thaliana</name>
    <name type="common">Mouse-ear cress</name>
    <dbReference type="NCBI Taxonomy" id="3702"/>
    <lineage>
        <taxon>Eukaryota</taxon>
        <taxon>Viridiplantae</taxon>
        <taxon>Streptophyta</taxon>
        <taxon>Embryophyta</taxon>
        <taxon>Tracheophyta</taxon>
        <taxon>Spermatophyta</taxon>
        <taxon>Magnoliopsida</taxon>
        <taxon>eudicotyledons</taxon>
        <taxon>Gunneridae</taxon>
        <taxon>Pentapetalae</taxon>
        <taxon>rosids</taxon>
        <taxon>malvids</taxon>
        <taxon>Brassicales</taxon>
        <taxon>Brassicaceae</taxon>
        <taxon>Camelineae</taxon>
        <taxon>Arabidopsis</taxon>
    </lineage>
</organism>
<keyword id="KW-0143">Chaperone</keyword>
<keyword id="KW-0256">Endoplasmic reticulum</keyword>
<keyword id="KW-0325">Glycoprotein</keyword>
<keyword id="KW-1185">Reference proteome</keyword>
<keyword id="KW-0732">Signal</keyword>
<keyword id="KW-0346">Stress response</keyword>
<protein>
    <recommendedName>
        <fullName>DnaJ protein ERDJ3B</fullName>
    </recommendedName>
    <alternativeName>
        <fullName>Chaperone protein dnaJ 19</fullName>
        <shortName>AtDjB19</shortName>
        <shortName>AtJ19</shortName>
    </alternativeName>
    <alternativeName>
        <fullName>Endoplasmic reticulum dnaJ domain-containing protein 3B</fullName>
        <shortName>AtERdj3B</shortName>
    </alternativeName>
    <alternativeName>
        <fullName>Protein SCJ1 homolog ERDJ3B</fullName>
    </alternativeName>
</protein>
<reference key="1">
    <citation type="journal article" date="2000" name="Nature">
        <title>Sequence and analysis of chromosome 3 of the plant Arabidopsis thaliana.</title>
        <authorList>
            <person name="Salanoubat M."/>
            <person name="Lemcke K."/>
            <person name="Rieger M."/>
            <person name="Ansorge W."/>
            <person name="Unseld M."/>
            <person name="Fartmann B."/>
            <person name="Valle G."/>
            <person name="Bloecker H."/>
            <person name="Perez-Alonso M."/>
            <person name="Obermaier B."/>
            <person name="Delseny M."/>
            <person name="Boutry M."/>
            <person name="Grivell L.A."/>
            <person name="Mache R."/>
            <person name="Puigdomenech P."/>
            <person name="De Simone V."/>
            <person name="Choisne N."/>
            <person name="Artiguenave F."/>
            <person name="Robert C."/>
            <person name="Brottier P."/>
            <person name="Wincker P."/>
            <person name="Cattolico L."/>
            <person name="Weissenbach J."/>
            <person name="Saurin W."/>
            <person name="Quetier F."/>
            <person name="Schaefer M."/>
            <person name="Mueller-Auer S."/>
            <person name="Gabel C."/>
            <person name="Fuchs M."/>
            <person name="Benes V."/>
            <person name="Wurmbach E."/>
            <person name="Drzonek H."/>
            <person name="Erfle H."/>
            <person name="Jordan N."/>
            <person name="Bangert S."/>
            <person name="Wiedelmann R."/>
            <person name="Kranz H."/>
            <person name="Voss H."/>
            <person name="Holland R."/>
            <person name="Brandt P."/>
            <person name="Nyakatura G."/>
            <person name="Vezzi A."/>
            <person name="D'Angelo M."/>
            <person name="Pallavicini A."/>
            <person name="Toppo S."/>
            <person name="Simionati B."/>
            <person name="Conrad A."/>
            <person name="Hornischer K."/>
            <person name="Kauer G."/>
            <person name="Loehnert T.-H."/>
            <person name="Nordsiek G."/>
            <person name="Reichelt J."/>
            <person name="Scharfe M."/>
            <person name="Schoen O."/>
            <person name="Bargues M."/>
            <person name="Terol J."/>
            <person name="Climent J."/>
            <person name="Navarro P."/>
            <person name="Collado C."/>
            <person name="Perez-Perez A."/>
            <person name="Ottenwaelder B."/>
            <person name="Duchemin D."/>
            <person name="Cooke R."/>
            <person name="Laudie M."/>
            <person name="Berger-Llauro C."/>
            <person name="Purnelle B."/>
            <person name="Masuy D."/>
            <person name="de Haan M."/>
            <person name="Maarse A.C."/>
            <person name="Alcaraz J.-P."/>
            <person name="Cottet A."/>
            <person name="Casacuberta E."/>
            <person name="Monfort A."/>
            <person name="Argiriou A."/>
            <person name="Flores M."/>
            <person name="Liguori R."/>
            <person name="Vitale D."/>
            <person name="Mannhaupt G."/>
            <person name="Haase D."/>
            <person name="Schoof H."/>
            <person name="Rudd S."/>
            <person name="Zaccaria P."/>
            <person name="Mewes H.-W."/>
            <person name="Mayer K.F.X."/>
            <person name="Kaul S."/>
            <person name="Town C.D."/>
            <person name="Koo H.L."/>
            <person name="Tallon L.J."/>
            <person name="Jenkins J."/>
            <person name="Rooney T."/>
            <person name="Rizzo M."/>
            <person name="Walts A."/>
            <person name="Utterback T."/>
            <person name="Fujii C.Y."/>
            <person name="Shea T.P."/>
            <person name="Creasy T.H."/>
            <person name="Haas B."/>
            <person name="Maiti R."/>
            <person name="Wu D."/>
            <person name="Peterson J."/>
            <person name="Van Aken S."/>
            <person name="Pai G."/>
            <person name="Militscher J."/>
            <person name="Sellers P."/>
            <person name="Gill J.E."/>
            <person name="Feldblyum T.V."/>
            <person name="Preuss D."/>
            <person name="Lin X."/>
            <person name="Nierman W.C."/>
            <person name="Salzberg S.L."/>
            <person name="White O."/>
            <person name="Venter J.C."/>
            <person name="Fraser C.M."/>
            <person name="Kaneko T."/>
            <person name="Nakamura Y."/>
            <person name="Sato S."/>
            <person name="Kato T."/>
            <person name="Asamizu E."/>
            <person name="Sasamoto S."/>
            <person name="Kimura T."/>
            <person name="Idesawa K."/>
            <person name="Kawashima K."/>
            <person name="Kishida Y."/>
            <person name="Kiyokawa C."/>
            <person name="Kohara M."/>
            <person name="Matsumoto M."/>
            <person name="Matsuno A."/>
            <person name="Muraki A."/>
            <person name="Nakayama S."/>
            <person name="Nakazaki N."/>
            <person name="Shinpo S."/>
            <person name="Takeuchi C."/>
            <person name="Wada T."/>
            <person name="Watanabe A."/>
            <person name="Yamada M."/>
            <person name="Yasuda M."/>
            <person name="Tabata S."/>
        </authorList>
    </citation>
    <scope>NUCLEOTIDE SEQUENCE [LARGE SCALE GENOMIC DNA]</scope>
    <source>
        <strain>cv. Columbia</strain>
    </source>
</reference>
<reference key="2">
    <citation type="journal article" date="2017" name="Plant J.">
        <title>Araport11: a complete reannotation of the Arabidopsis thaliana reference genome.</title>
        <authorList>
            <person name="Cheng C.Y."/>
            <person name="Krishnakumar V."/>
            <person name="Chan A.P."/>
            <person name="Thibaud-Nissen F."/>
            <person name="Schobel S."/>
            <person name="Town C.D."/>
        </authorList>
    </citation>
    <scope>GENOME REANNOTATION</scope>
    <source>
        <strain>cv. Columbia</strain>
    </source>
</reference>
<reference key="3">
    <citation type="journal article" date="2003" name="Science">
        <title>Empirical analysis of transcriptional activity in the Arabidopsis genome.</title>
        <authorList>
            <person name="Yamada K."/>
            <person name="Lim J."/>
            <person name="Dale J.M."/>
            <person name="Chen H."/>
            <person name="Shinn P."/>
            <person name="Palm C.J."/>
            <person name="Southwick A.M."/>
            <person name="Wu H.C."/>
            <person name="Kim C.J."/>
            <person name="Nguyen M."/>
            <person name="Pham P.K."/>
            <person name="Cheuk R.F."/>
            <person name="Karlin-Newmann G."/>
            <person name="Liu S.X."/>
            <person name="Lam B."/>
            <person name="Sakano H."/>
            <person name="Wu T."/>
            <person name="Yu G."/>
            <person name="Miranda M."/>
            <person name="Quach H.L."/>
            <person name="Tripp M."/>
            <person name="Chang C.H."/>
            <person name="Lee J.M."/>
            <person name="Toriumi M.J."/>
            <person name="Chan M.M."/>
            <person name="Tang C.C."/>
            <person name="Onodera C.S."/>
            <person name="Deng J.M."/>
            <person name="Akiyama K."/>
            <person name="Ansari Y."/>
            <person name="Arakawa T."/>
            <person name="Banh J."/>
            <person name="Banno F."/>
            <person name="Bowser L."/>
            <person name="Brooks S.Y."/>
            <person name="Carninci P."/>
            <person name="Chao Q."/>
            <person name="Choy N."/>
            <person name="Enju A."/>
            <person name="Goldsmith A.D."/>
            <person name="Gurjal M."/>
            <person name="Hansen N.F."/>
            <person name="Hayashizaki Y."/>
            <person name="Johnson-Hopson C."/>
            <person name="Hsuan V.W."/>
            <person name="Iida K."/>
            <person name="Karnes M."/>
            <person name="Khan S."/>
            <person name="Koesema E."/>
            <person name="Ishida J."/>
            <person name="Jiang P.X."/>
            <person name="Jones T."/>
            <person name="Kawai J."/>
            <person name="Kamiya A."/>
            <person name="Meyers C."/>
            <person name="Nakajima M."/>
            <person name="Narusaka M."/>
            <person name="Seki M."/>
            <person name="Sakurai T."/>
            <person name="Satou M."/>
            <person name="Tamse R."/>
            <person name="Vaysberg M."/>
            <person name="Wallender E.K."/>
            <person name="Wong C."/>
            <person name="Yamamura Y."/>
            <person name="Yuan S."/>
            <person name="Shinozaki K."/>
            <person name="Davis R.W."/>
            <person name="Theologis A."/>
            <person name="Ecker J.R."/>
        </authorList>
    </citation>
    <scope>NUCLEOTIDE SEQUENCE [LARGE SCALE MRNA]</scope>
    <source>
        <strain>cv. Columbia</strain>
    </source>
</reference>
<reference key="4">
    <citation type="submission" date="2002-03" db="EMBL/GenBank/DDBJ databases">
        <title>Full-length cDNA from Arabidopsis thaliana.</title>
        <authorList>
            <person name="Brover V.V."/>
            <person name="Troukhan M.E."/>
            <person name="Alexandrov N.A."/>
            <person name="Lu Y.-P."/>
            <person name="Flavell R.B."/>
            <person name="Feldmann K.A."/>
        </authorList>
    </citation>
    <scope>NUCLEOTIDE SEQUENCE [LARGE SCALE MRNA]</scope>
</reference>
<reference key="5">
    <citation type="journal article" date="2001" name="Cell Stress Chaperones">
        <title>The J-domain proteins of Arabidopsis thaliana: an unexpectedly large and diverse family of chaperones.</title>
        <authorList>
            <person name="Miernyk J.A."/>
        </authorList>
    </citation>
    <scope>GENE FAMILY</scope>
    <scope>NOMENCLATURE</scope>
</reference>
<reference key="6">
    <citation type="journal article" date="2008" name="Plant Cell Physiol.">
        <title>Arabidopsis thaliana has a set of J proteins in the endoplasmic reticulum that are conserved from yeast to animals and plants.</title>
        <authorList>
            <person name="Yamamoto M."/>
            <person name="Maruyama D."/>
            <person name="Endo T."/>
            <person name="Nishikawa S."/>
        </authorList>
    </citation>
    <scope>SUBCELLULAR LOCATION</scope>
    <scope>TISSUE SPECIFICITY</scope>
    <scope>INDUCTION BY TUNICAMYCIN</scope>
    <scope>GLYCOSYLATION</scope>
    <scope>DISRUPTION PHENOTYPE</scope>
</reference>
<reference key="7">
    <citation type="journal article" date="2009" name="EMBO J.">
        <title>Control of the pattern-recognition receptor EFR by an ER protein complex in plant immunity.</title>
        <authorList>
            <person name="Nekrasov V."/>
            <person name="Li J."/>
            <person name="Batoux M."/>
            <person name="Roux M."/>
            <person name="Chu Z.H."/>
            <person name="Lacombe S."/>
            <person name="Rougon A."/>
            <person name="Bittel P."/>
            <person name="Kiss-Papp M."/>
            <person name="Chinchilla D."/>
            <person name="van Esse H.P."/>
            <person name="Jorda L."/>
            <person name="Schwessinger B."/>
            <person name="Nicaise V."/>
            <person name="Thomma B.P."/>
            <person name="Molina A."/>
            <person name="Jones J.D."/>
            <person name="Zipfel C."/>
        </authorList>
    </citation>
    <scope>FUNCTION</scope>
    <scope>INTERACTION WITH SDF2 AND MED37A/BIP1</scope>
    <scope>DISRUPTION PHENOTYPE</scope>
</reference>
<proteinExistence type="evidence at protein level"/>